<accession>Q28294</accession>
<organism>
    <name type="scientific">Canis lupus familiaris</name>
    <name type="common">Dog</name>
    <name type="synonym">Canis familiaris</name>
    <dbReference type="NCBI Taxonomy" id="9615"/>
    <lineage>
        <taxon>Eukaryota</taxon>
        <taxon>Metazoa</taxon>
        <taxon>Chordata</taxon>
        <taxon>Craniata</taxon>
        <taxon>Vertebrata</taxon>
        <taxon>Euteleostomi</taxon>
        <taxon>Mammalia</taxon>
        <taxon>Eutheria</taxon>
        <taxon>Laurasiatheria</taxon>
        <taxon>Carnivora</taxon>
        <taxon>Caniformia</taxon>
        <taxon>Canidae</taxon>
        <taxon>Canis</taxon>
    </lineage>
</organism>
<keyword id="KW-1003">Cell membrane</keyword>
<keyword id="KW-0333">Golgi apparatus</keyword>
<keyword id="KW-0342">GTP-binding</keyword>
<keyword id="KW-0378">Hydrolase</keyword>
<keyword id="KW-0449">Lipoprotein</keyword>
<keyword id="KW-0460">Magnesium</keyword>
<keyword id="KW-0472">Membrane</keyword>
<keyword id="KW-0479">Metal-binding</keyword>
<keyword id="KW-0547">Nucleotide-binding</keyword>
<keyword id="KW-0539">Nucleus</keyword>
<keyword id="KW-0564">Palmitate</keyword>
<keyword id="KW-1185">Reference proteome</keyword>
<keyword id="KW-0807">Transducer</keyword>
<dbReference type="EC" id="3.6.5.-" evidence="1"/>
<dbReference type="EMBL" id="L76257">
    <property type="protein sequence ID" value="AAB05548.1"/>
    <property type="molecule type" value="mRNA"/>
</dbReference>
<dbReference type="RefSeq" id="NP_001003249.1">
    <property type="nucleotide sequence ID" value="NM_001003249.1"/>
</dbReference>
<dbReference type="RefSeq" id="XP_038509327.1">
    <property type="nucleotide sequence ID" value="XM_038653399.1"/>
</dbReference>
<dbReference type="SMR" id="Q28294"/>
<dbReference type="FunCoup" id="Q28294">
    <property type="interactions" value="1699"/>
</dbReference>
<dbReference type="STRING" id="9615.ENSCAFP00000028446"/>
<dbReference type="SwissPalm" id="Q28294"/>
<dbReference type="PaxDb" id="9612-ENSCAFP00000028446"/>
<dbReference type="Ensembl" id="ENSCAFT00030003901.1">
    <property type="protein sequence ID" value="ENSCAFP00030003462.1"/>
    <property type="gene ID" value="ENSCAFG00030002067.1"/>
</dbReference>
<dbReference type="Ensembl" id="ENSCAFT00040005026.1">
    <property type="protein sequence ID" value="ENSCAFP00040004320.1"/>
    <property type="gene ID" value="ENSCAFG00040002598.1"/>
</dbReference>
<dbReference type="GeneID" id="403928"/>
<dbReference type="KEGG" id="cfa:403928"/>
<dbReference type="CTD" id="2776"/>
<dbReference type="eggNOG" id="KOG0085">
    <property type="taxonomic scope" value="Eukaryota"/>
</dbReference>
<dbReference type="InParanoid" id="Q28294"/>
<dbReference type="OrthoDB" id="5817230at2759"/>
<dbReference type="Reactome" id="R-CFA-112043">
    <property type="pathway name" value="PLC beta mediated events"/>
</dbReference>
<dbReference type="Reactome" id="R-CFA-202040">
    <property type="pathway name" value="G-protein activation"/>
</dbReference>
<dbReference type="Reactome" id="R-CFA-399997">
    <property type="pathway name" value="Acetylcholine regulates insulin secretion"/>
</dbReference>
<dbReference type="Reactome" id="R-CFA-416476">
    <property type="pathway name" value="G alpha (q) signalling events"/>
</dbReference>
<dbReference type="Reactome" id="R-CFA-418592">
    <property type="pathway name" value="ADP signalling through P2Y purinoceptor 1"/>
</dbReference>
<dbReference type="Reactome" id="R-CFA-428930">
    <property type="pathway name" value="Thromboxane signalling through TP receptor"/>
</dbReference>
<dbReference type="Reactome" id="R-CFA-434316">
    <property type="pathway name" value="Fatty Acids bound to GPR40 (FFAR1) regulate insulin secretion"/>
</dbReference>
<dbReference type="Reactome" id="R-CFA-456926">
    <property type="pathway name" value="Thrombin signalling through proteinase activated receptors (PARs)"/>
</dbReference>
<dbReference type="Reactome" id="R-CFA-6814122">
    <property type="pathway name" value="Cooperation of PDCL (PhLP1) and TRiC/CCT in G-protein beta folding"/>
</dbReference>
<dbReference type="Reactome" id="R-CFA-9856530">
    <property type="pathway name" value="High laminar flow shear stress activates signaling by PIEZO1 and PECAM1:CDH5:KDR in endothelial cells"/>
</dbReference>
<dbReference type="Reactome" id="R-CFA-9860927">
    <property type="pathway name" value="Turbulent (oscillatory, disturbed) flow shear stress activates signaling by PIEZO1 and integrins in endothelial cells"/>
</dbReference>
<dbReference type="Proteomes" id="UP000002254">
    <property type="component" value="Unplaced"/>
</dbReference>
<dbReference type="Proteomes" id="UP000694429">
    <property type="component" value="Chromosome 1"/>
</dbReference>
<dbReference type="Proteomes" id="UP000694542">
    <property type="component" value="Chromosome 1"/>
</dbReference>
<dbReference type="Proteomes" id="UP000805418">
    <property type="component" value="Unplaced"/>
</dbReference>
<dbReference type="GO" id="GO:0005737">
    <property type="term" value="C:cytoplasm"/>
    <property type="evidence" value="ECO:0000318"/>
    <property type="project" value="GO_Central"/>
</dbReference>
<dbReference type="GO" id="GO:0005794">
    <property type="term" value="C:Golgi apparatus"/>
    <property type="evidence" value="ECO:0007669"/>
    <property type="project" value="UniProtKB-SubCell"/>
</dbReference>
<dbReference type="GO" id="GO:0005834">
    <property type="term" value="C:heterotrimeric G-protein complex"/>
    <property type="evidence" value="ECO:0000318"/>
    <property type="project" value="GO_Central"/>
</dbReference>
<dbReference type="GO" id="GO:0016020">
    <property type="term" value="C:membrane"/>
    <property type="evidence" value="ECO:0000250"/>
    <property type="project" value="AgBase"/>
</dbReference>
<dbReference type="GO" id="GO:0031965">
    <property type="term" value="C:nuclear membrane"/>
    <property type="evidence" value="ECO:0007669"/>
    <property type="project" value="UniProtKB-SubCell"/>
</dbReference>
<dbReference type="GO" id="GO:0001750">
    <property type="term" value="C:photoreceptor outer segment"/>
    <property type="evidence" value="ECO:0000250"/>
    <property type="project" value="AgBase"/>
</dbReference>
<dbReference type="GO" id="GO:0045202">
    <property type="term" value="C:synapse"/>
    <property type="evidence" value="ECO:0007669"/>
    <property type="project" value="GOC"/>
</dbReference>
<dbReference type="GO" id="GO:0001664">
    <property type="term" value="F:G protein-coupled receptor binding"/>
    <property type="evidence" value="ECO:0000318"/>
    <property type="project" value="GO_Central"/>
</dbReference>
<dbReference type="GO" id="GO:0031683">
    <property type="term" value="F:G-protein beta/gamma-subunit complex binding"/>
    <property type="evidence" value="ECO:0000318"/>
    <property type="project" value="GO_Central"/>
</dbReference>
<dbReference type="GO" id="GO:0005525">
    <property type="term" value="F:GTP binding"/>
    <property type="evidence" value="ECO:0007669"/>
    <property type="project" value="UniProtKB-KW"/>
</dbReference>
<dbReference type="GO" id="GO:0005096">
    <property type="term" value="F:GTPase activator activity"/>
    <property type="evidence" value="ECO:0000318"/>
    <property type="project" value="GO_Central"/>
</dbReference>
<dbReference type="GO" id="GO:0003924">
    <property type="term" value="F:GTPase activity"/>
    <property type="evidence" value="ECO:0000318"/>
    <property type="project" value="GO_Central"/>
</dbReference>
<dbReference type="GO" id="GO:0046872">
    <property type="term" value="F:metal ion binding"/>
    <property type="evidence" value="ECO:0007669"/>
    <property type="project" value="UniProtKB-KW"/>
</dbReference>
<dbReference type="GO" id="GO:0007189">
    <property type="term" value="P:adenylate cyclase-activating G protein-coupled receptor signaling pathway"/>
    <property type="evidence" value="ECO:0000318"/>
    <property type="project" value="GO_Central"/>
</dbReference>
<dbReference type="GO" id="GO:0009649">
    <property type="term" value="P:entrainment of circadian clock"/>
    <property type="evidence" value="ECO:0000250"/>
    <property type="project" value="AgBase"/>
</dbReference>
<dbReference type="GO" id="GO:0007213">
    <property type="term" value="P:G protein-coupled acetylcholine receptor signaling pathway"/>
    <property type="evidence" value="ECO:0000250"/>
    <property type="project" value="AgBase"/>
</dbReference>
<dbReference type="GO" id="GO:0007215">
    <property type="term" value="P:glutamate receptor signaling pathway"/>
    <property type="evidence" value="ECO:0000318"/>
    <property type="project" value="GO_Central"/>
</dbReference>
<dbReference type="GO" id="GO:0007603">
    <property type="term" value="P:phototransduction, visible light"/>
    <property type="evidence" value="ECO:0000250"/>
    <property type="project" value="AgBase"/>
</dbReference>
<dbReference type="GO" id="GO:0010543">
    <property type="term" value="P:regulation of platelet activation"/>
    <property type="evidence" value="ECO:0000250"/>
    <property type="project" value="UniProtKB"/>
</dbReference>
<dbReference type="CDD" id="cd00066">
    <property type="entry name" value="G-alpha"/>
    <property type="match status" value="1"/>
</dbReference>
<dbReference type="FunFam" id="3.40.50.300:FF:003977">
    <property type="entry name" value="Guanine nucleotide-binding protein G(q) subunit alpha"/>
    <property type="match status" value="1"/>
</dbReference>
<dbReference type="FunFam" id="1.10.400.10:FF:000002">
    <property type="entry name" value="guanine nucleotide-binding protein G(Q) subunit alpha"/>
    <property type="match status" value="1"/>
</dbReference>
<dbReference type="FunFam" id="3.40.50.300:FF:000692">
    <property type="entry name" value="Guanine nucleotide-binding protein subunit alpha"/>
    <property type="match status" value="1"/>
</dbReference>
<dbReference type="Gene3D" id="1.10.400.10">
    <property type="entry name" value="GI Alpha 1, domain 2-like"/>
    <property type="match status" value="1"/>
</dbReference>
<dbReference type="Gene3D" id="3.40.50.300">
    <property type="entry name" value="P-loop containing nucleotide triphosphate hydrolases"/>
    <property type="match status" value="1"/>
</dbReference>
<dbReference type="InterPro" id="IPR000654">
    <property type="entry name" value="Gprotein_alpha_Q"/>
</dbReference>
<dbReference type="InterPro" id="IPR001019">
    <property type="entry name" value="Gprotein_alpha_su"/>
</dbReference>
<dbReference type="InterPro" id="IPR011025">
    <property type="entry name" value="GproteinA_insert"/>
</dbReference>
<dbReference type="InterPro" id="IPR027417">
    <property type="entry name" value="P-loop_NTPase"/>
</dbReference>
<dbReference type="PANTHER" id="PTHR10218">
    <property type="entry name" value="GTP-BINDING PROTEIN ALPHA SUBUNIT"/>
    <property type="match status" value="1"/>
</dbReference>
<dbReference type="PANTHER" id="PTHR10218:SF329">
    <property type="entry name" value="GUANINE NUCLEOTIDE-BINDING PROTEIN G(Q) SUBUNIT ALPHA"/>
    <property type="match status" value="1"/>
</dbReference>
<dbReference type="Pfam" id="PF00503">
    <property type="entry name" value="G-alpha"/>
    <property type="match status" value="1"/>
</dbReference>
<dbReference type="PRINTS" id="PR00318">
    <property type="entry name" value="GPROTEINA"/>
</dbReference>
<dbReference type="PRINTS" id="PR00442">
    <property type="entry name" value="GPROTEINAQ"/>
</dbReference>
<dbReference type="SMART" id="SM00275">
    <property type="entry name" value="G_alpha"/>
    <property type="match status" value="1"/>
</dbReference>
<dbReference type="SUPFAM" id="SSF52540">
    <property type="entry name" value="P-loop containing nucleoside triphosphate hydrolases"/>
    <property type="match status" value="1"/>
</dbReference>
<dbReference type="SUPFAM" id="SSF47895">
    <property type="entry name" value="Transducin (alpha subunit), insertion domain"/>
    <property type="match status" value="1"/>
</dbReference>
<dbReference type="PROSITE" id="PS51882">
    <property type="entry name" value="G_ALPHA"/>
    <property type="match status" value="1"/>
</dbReference>
<protein>
    <recommendedName>
        <fullName>Guanine nucleotide-binding protein G(q) subunit alpha</fullName>
        <ecNumber evidence="1">3.6.5.-</ecNumber>
    </recommendedName>
    <alternativeName>
        <fullName>Guanine nucleotide-binding protein alpha-q</fullName>
    </alternativeName>
</protein>
<reference key="1">
    <citation type="journal article" date="1996" name="Biochem. J.">
        <title>Specificity of G alpha q and G alpha 11 gene expression in platelets and erythrocytes. Expressions of cellular differentiation and species differences.</title>
        <authorList>
            <person name="Johnson G.J."/>
            <person name="Leis L.A."/>
            <person name="Dunlop P.C."/>
        </authorList>
    </citation>
    <scope>NUCLEOTIDE SEQUENCE [MRNA]</scope>
</reference>
<proteinExistence type="evidence at transcript level"/>
<feature type="chain" id="PRO_0000203759" description="Guanine nucleotide-binding protein G(q) subunit alpha">
    <location>
        <begin position="1"/>
        <end position="359"/>
    </location>
</feature>
<feature type="domain" description="G-alpha" evidence="3">
    <location>
        <begin position="38"/>
        <end position="359"/>
    </location>
</feature>
<feature type="region of interest" description="G1 motif" evidence="3">
    <location>
        <begin position="41"/>
        <end position="54"/>
    </location>
</feature>
<feature type="region of interest" description="G2 motif" evidence="3">
    <location>
        <begin position="178"/>
        <end position="186"/>
    </location>
</feature>
<feature type="region of interest" description="G3 motif" evidence="3">
    <location>
        <begin position="201"/>
        <end position="210"/>
    </location>
</feature>
<feature type="region of interest" description="G4 motif" evidence="3">
    <location>
        <begin position="270"/>
        <end position="277"/>
    </location>
</feature>
<feature type="region of interest" description="G5 motif" evidence="3">
    <location>
        <begin position="329"/>
        <end position="334"/>
    </location>
</feature>
<feature type="binding site" evidence="1">
    <location>
        <position position="50"/>
    </location>
    <ligand>
        <name>GTP</name>
        <dbReference type="ChEBI" id="CHEBI:37565"/>
    </ligand>
</feature>
<feature type="binding site" evidence="1">
    <location>
        <position position="51"/>
    </location>
    <ligand>
        <name>GTP</name>
        <dbReference type="ChEBI" id="CHEBI:37565"/>
    </ligand>
</feature>
<feature type="binding site" evidence="1">
    <location>
        <position position="52"/>
    </location>
    <ligand>
        <name>GTP</name>
        <dbReference type="ChEBI" id="CHEBI:37565"/>
    </ligand>
</feature>
<feature type="binding site" evidence="1">
    <location>
        <position position="53"/>
    </location>
    <ligand>
        <name>GTP</name>
        <dbReference type="ChEBI" id="CHEBI:37565"/>
    </ligand>
</feature>
<feature type="binding site" evidence="1">
    <location>
        <position position="53"/>
    </location>
    <ligand>
        <name>Mg(2+)</name>
        <dbReference type="ChEBI" id="CHEBI:18420"/>
    </ligand>
</feature>
<feature type="binding site" evidence="1">
    <location>
        <position position="54"/>
    </location>
    <ligand>
        <name>GTP</name>
        <dbReference type="ChEBI" id="CHEBI:37565"/>
    </ligand>
</feature>
<feature type="binding site" evidence="1">
    <location>
        <position position="156"/>
    </location>
    <ligand>
        <name>GTP</name>
        <dbReference type="ChEBI" id="CHEBI:37565"/>
    </ligand>
</feature>
<feature type="binding site" evidence="1">
    <location>
        <position position="180"/>
    </location>
    <ligand>
        <name>GTP</name>
        <dbReference type="ChEBI" id="CHEBI:37565"/>
    </ligand>
</feature>
<feature type="binding site" evidence="1">
    <location>
        <position position="181"/>
    </location>
    <ligand>
        <name>GTP</name>
        <dbReference type="ChEBI" id="CHEBI:37565"/>
    </ligand>
</feature>
<feature type="binding site" evidence="1">
    <location>
        <position position="183"/>
    </location>
    <ligand>
        <name>GTP</name>
        <dbReference type="ChEBI" id="CHEBI:37565"/>
    </ligand>
</feature>
<feature type="binding site" evidence="1">
    <location>
        <position position="186"/>
    </location>
    <ligand>
        <name>Mg(2+)</name>
        <dbReference type="ChEBI" id="CHEBI:18420"/>
    </ligand>
</feature>
<feature type="binding site" evidence="1">
    <location>
        <position position="274"/>
    </location>
    <ligand>
        <name>GTP</name>
        <dbReference type="ChEBI" id="CHEBI:37565"/>
    </ligand>
</feature>
<feature type="binding site" evidence="1">
    <location>
        <position position="275"/>
    </location>
    <ligand>
        <name>GTP</name>
        <dbReference type="ChEBI" id="CHEBI:37565"/>
    </ligand>
</feature>
<feature type="binding site" evidence="1">
    <location>
        <position position="277"/>
    </location>
    <ligand>
        <name>GTP</name>
        <dbReference type="ChEBI" id="CHEBI:37565"/>
    </ligand>
</feature>
<feature type="binding site" evidence="1">
    <location>
        <position position="331"/>
    </location>
    <ligand>
        <name>GTP</name>
        <dbReference type="ChEBI" id="CHEBI:37565"/>
    </ligand>
</feature>
<feature type="modified residue" description="5-glutamyl histamine" evidence="1">
    <location>
        <position position="209"/>
    </location>
</feature>
<feature type="lipid moiety-binding region" description="S-palmitoyl cysteine" evidence="1">
    <location>
        <position position="9"/>
    </location>
</feature>
<feature type="lipid moiety-binding region" description="S-palmitoyl cysteine" evidence="1">
    <location>
        <position position="10"/>
    </location>
</feature>
<evidence type="ECO:0000250" key="1">
    <source>
        <dbReference type="UniProtKB" id="P21279"/>
    </source>
</evidence>
<evidence type="ECO:0000250" key="2">
    <source>
        <dbReference type="UniProtKB" id="P50148"/>
    </source>
</evidence>
<evidence type="ECO:0000255" key="3">
    <source>
        <dbReference type="PROSITE-ProRule" id="PRU01230"/>
    </source>
</evidence>
<evidence type="ECO:0000305" key="4"/>
<gene>
    <name type="primary">GNAQ</name>
</gene>
<comment type="function">
    <text evidence="1 2">Guanine nucleotide-binding proteins (G proteins) function as transducers downstream of G protein-coupled receptors (GPCRs) in numerous signaling cascades. The alpha chain contains the guanine nucleotide binding site and alternates between an active, GTP-bound state and an inactive, GDP-bound state. Signaling by an activated GPCR promotes GDP release and GTP binding. The alpha subunit has a low GTPase activity that converts bound GTP to GDP, thereby terminating the signal. Both GDP release and GTP hydrolysis are modulated by numerous regulatory proteins. Signaling is mediated via phospholipase C-beta-dependent inositol lipid hydrolysis for signal propagation: activates phospholipase C-beta: following GPCR activation, GNAQ activates PLC-beta (PLCB1, PLCB2, PLCB3 or PLCB4), leading to production of diacylglycerol (DAG) and inositol 1,4,5-trisphosphate (IP3). Required for platelet activation. Regulates B-cell selection and survival and is required to prevent B-cell-dependent autoimmunity. Regulates chemotaxis of BM-derived neutrophils and dendritic cells (in vitro) (By similarity). Transduces FFAR4 signaling in response to long-chain fatty acids (LCFAs) (By similarity). Together with GNA11, required for heart development (By similarity).</text>
</comment>
<comment type="catalytic activity">
    <reaction evidence="1">
        <text>GTP + H2O = GDP + phosphate + H(+)</text>
        <dbReference type="Rhea" id="RHEA:19669"/>
        <dbReference type="ChEBI" id="CHEBI:15377"/>
        <dbReference type="ChEBI" id="CHEBI:15378"/>
        <dbReference type="ChEBI" id="CHEBI:37565"/>
        <dbReference type="ChEBI" id="CHEBI:43474"/>
        <dbReference type="ChEBI" id="CHEBI:58189"/>
    </reaction>
    <physiologicalReaction direction="left-to-right" evidence="1">
        <dbReference type="Rhea" id="RHEA:19670"/>
    </physiologicalReaction>
</comment>
<comment type="subunit">
    <text evidence="2">G proteins are composed of 3 units; alpha, beta and gamma. The alpha chain contains the guanine nucleotide binding site. Interacts (GDP-bound form) with RIC8A (via C-terminus); promoting GNAQ folding and association with the plasma membrane. Binds NHERF1. Forms a complex with PECAM1 and BDKRB2. Interacts with GAS2L2.</text>
</comment>
<comment type="subcellular location">
    <subcellularLocation>
        <location evidence="2">Cell membrane</location>
        <topology evidence="2">Lipid-anchor</topology>
    </subcellularLocation>
    <subcellularLocation>
        <location evidence="2">Golgi apparatus</location>
    </subcellularLocation>
    <subcellularLocation>
        <location evidence="1">Nucleus</location>
    </subcellularLocation>
    <subcellularLocation>
        <location evidence="1">Nucleus membrane</location>
    </subcellularLocation>
    <text evidence="1">Colocalizes with the adrenergic receptors, ADREN1A and ADREN1B, at the nuclear membrane of cardiac myocytes.</text>
</comment>
<comment type="PTM">
    <text evidence="1">Palmitoylated by ZDHHC3 and ZDHHC7. Palmitoylation occurs in the Golgi and participates in the localization of GNAQ to the plasma membrane.</text>
</comment>
<comment type="PTM">
    <text evidence="1">Histaminylated at Gln-209 residues by TGM2.</text>
</comment>
<comment type="similarity">
    <text evidence="4">Belongs to the G-alpha family. G(q) subfamily.</text>
</comment>
<name>GNAQ_CANLF</name>
<sequence length="359" mass="42142">MTLESIMACCLSEEAKEARRINDEIERQLRRDKRDARRELKLLLLGTGESGKSTFIKQMRIIHGSGYSDEDKRGFTKLVYQNIFTAMQAMIRAMDTLKIPYKYEHNKAHAQLVREVDVEKVSAFENPYVDAIKSLWNDPGIQECYDRRREYQLSDSTKYYLNDLDRVADPAYLPTQQDVLRVRVPTTGIIEYPFDLQSVIFRMVDVGGQRSERRKWIHCFENVTSIMFLVALSEYDQVLVESDNENRMEESKALFRTIITYPWFQNSSVILFLNKKDLLEEKIMYSHLVDYFPEYDGPQRDAQAAREFILKMFVDLNPDSDKIIYSHFTCATDTENIRFVFAAVKDTILQLNLKEYNLV</sequence>